<comment type="function">
    <text evidence="3">May be involved in glycolipids transfer.</text>
</comment>
<comment type="alternative products">
    <event type="alternative splicing"/>
    <isoform>
        <id>Q9LU33-1</id>
        <name>1</name>
        <sequence type="displayed"/>
    </isoform>
    <isoform>
        <id>Q9LU33-2</id>
        <name>2</name>
        <sequence type="described" ref="VSP_057554"/>
    </isoform>
    <isoform>
        <id>Q9LU33-3</id>
        <name>3</name>
        <sequence type="described" ref="VSP_057553"/>
    </isoform>
</comment>
<comment type="similarity">
    <text evidence="2">Belongs to the GLTP family.</text>
</comment>
<feature type="chain" id="PRO_0000432646" description="Glycolipid transfer protein 3">
    <location>
        <begin position="1"/>
        <end position="233"/>
    </location>
</feature>
<feature type="binding site" evidence="3">
    <location>
        <position position="79"/>
    </location>
    <ligand>
        <name>a ganglioside GM3 (d18:1(4E))</name>
        <dbReference type="ChEBI" id="CHEBI:60065"/>
    </ligand>
</feature>
<feature type="binding site" evidence="3">
    <location>
        <position position="83"/>
    </location>
    <ligand>
        <name>a ganglioside GM3 (d18:1(4E))</name>
        <dbReference type="ChEBI" id="CHEBI:60065"/>
    </ligand>
</feature>
<feature type="binding site" evidence="3">
    <location>
        <position position="126"/>
    </location>
    <ligand>
        <name>a ganglioside GM3 (d18:1(4E))</name>
        <dbReference type="ChEBI" id="CHEBI:60065"/>
    </ligand>
</feature>
<feature type="binding site" evidence="3">
    <location>
        <position position="165"/>
    </location>
    <ligand>
        <name>a ganglioside GM3 (d18:1(4E))</name>
        <dbReference type="ChEBI" id="CHEBI:60065"/>
    </ligand>
</feature>
<feature type="splice variant" id="VSP_057553" description="In isoform 3.">
    <location>
        <begin position="1"/>
        <end position="89"/>
    </location>
</feature>
<feature type="splice variant" id="VSP_057554" description="In isoform 2.">
    <original>MKRKRCEMEETTKKKKMTEIGSAIEELSVLSIAKTTIVTTEKEAINIINLPLKPLLSFCNIIVQVLDKIGPTMAVLRHDIDQNIQ</original>
    <variation>M</variation>
    <location>
        <begin position="1"/>
        <end position="85"/>
    </location>
</feature>
<feature type="sequence conflict" description="In Ref. 5; AAM63652." evidence="2" ref="5">
    <original>N</original>
    <variation>K</variation>
    <location>
        <position position="182"/>
    </location>
</feature>
<sequence length="233" mass="26517">MKRKRCEMEETTKKKKMTEIGSAIEELSVLSIAKTTIVTTEKEAINIINLPLKPLLSFCNIIVQVLDKIGPTMAVLRHDIDQNIQRLEKMWESDPLVYSNLVEILRKEAKEGSSRKPKSCSRAALWLTRAMDFTLALLQRLVKDMSQNMEQAIEECYNLTIKPWHGWISSAAFKVALKLVPNNNTFINVLAAKDETHQMVQDDITSLISLLIPLLSQLHSILELYEVSKLKSP</sequence>
<protein>
    <recommendedName>
        <fullName evidence="1">Glycolipid transfer protein 3</fullName>
    </recommendedName>
</protein>
<dbReference type="EMBL" id="AB023045">
    <property type="protein sequence ID" value="BAB01718.1"/>
    <property type="molecule type" value="Genomic_DNA"/>
</dbReference>
<dbReference type="EMBL" id="CP002686">
    <property type="protein sequence ID" value="AEE76483.1"/>
    <property type="molecule type" value="Genomic_DNA"/>
</dbReference>
<dbReference type="EMBL" id="CP002686">
    <property type="protein sequence ID" value="AEE76484.1"/>
    <property type="molecule type" value="Genomic_DNA"/>
</dbReference>
<dbReference type="EMBL" id="CP002686">
    <property type="protein sequence ID" value="AEE76485.1"/>
    <property type="molecule type" value="Genomic_DNA"/>
</dbReference>
<dbReference type="EMBL" id="AK228318">
    <property type="protein sequence ID" value="BAF00261.1"/>
    <property type="molecule type" value="mRNA"/>
</dbReference>
<dbReference type="EMBL" id="BT029314">
    <property type="protein sequence ID" value="ABK32128.1"/>
    <property type="molecule type" value="mRNA"/>
</dbReference>
<dbReference type="EMBL" id="AY086592">
    <property type="protein sequence ID" value="AAM63652.1"/>
    <property type="molecule type" value="mRNA"/>
</dbReference>
<dbReference type="RefSeq" id="NP_001154632.1">
    <molecule id="Q9LU33-1"/>
    <property type="nucleotide sequence ID" value="NM_001161160.2"/>
</dbReference>
<dbReference type="RefSeq" id="NP_566679.1">
    <molecule id="Q9LU33-3"/>
    <property type="nucleotide sequence ID" value="NM_113021.3"/>
</dbReference>
<dbReference type="RefSeq" id="NP_850619.1">
    <molecule id="Q9LU33-2"/>
    <property type="nucleotide sequence ID" value="NM_180288.2"/>
</dbReference>
<dbReference type="SMR" id="Q9LU33"/>
<dbReference type="FunCoup" id="Q9LU33">
    <property type="interactions" value="2416"/>
</dbReference>
<dbReference type="STRING" id="3702.Q9LU33"/>
<dbReference type="GlyGen" id="Q9LU33">
    <property type="glycosylation" value="1 site"/>
</dbReference>
<dbReference type="PaxDb" id="3702-AT3G21260.3"/>
<dbReference type="EnsemblPlants" id="AT3G21260.1">
    <molecule id="Q9LU33-3"/>
    <property type="protein sequence ID" value="AT3G21260.1"/>
    <property type="gene ID" value="AT3G21260"/>
</dbReference>
<dbReference type="EnsemblPlants" id="AT3G21260.2">
    <molecule id="Q9LU33-2"/>
    <property type="protein sequence ID" value="AT3G21260.2"/>
    <property type="gene ID" value="AT3G21260"/>
</dbReference>
<dbReference type="EnsemblPlants" id="AT3G21260.3">
    <molecule id="Q9LU33-1"/>
    <property type="protein sequence ID" value="AT3G21260.3"/>
    <property type="gene ID" value="AT3G21260"/>
</dbReference>
<dbReference type="GeneID" id="821680"/>
<dbReference type="Gramene" id="AT3G21260.1">
    <molecule id="Q9LU33-3"/>
    <property type="protein sequence ID" value="AT3G21260.1"/>
    <property type="gene ID" value="AT3G21260"/>
</dbReference>
<dbReference type="Gramene" id="AT3G21260.2">
    <molecule id="Q9LU33-2"/>
    <property type="protein sequence ID" value="AT3G21260.2"/>
    <property type="gene ID" value="AT3G21260"/>
</dbReference>
<dbReference type="Gramene" id="AT3G21260.3">
    <molecule id="Q9LU33-1"/>
    <property type="protein sequence ID" value="AT3G21260.3"/>
    <property type="gene ID" value="AT3G21260"/>
</dbReference>
<dbReference type="KEGG" id="ath:AT3G21260"/>
<dbReference type="Araport" id="AT3G21260"/>
<dbReference type="TAIR" id="AT3G21260">
    <property type="gene designation" value="GLTP3"/>
</dbReference>
<dbReference type="eggNOG" id="KOG3221">
    <property type="taxonomic scope" value="Eukaryota"/>
</dbReference>
<dbReference type="HOGENOM" id="CLU_079400_1_0_1"/>
<dbReference type="InParanoid" id="Q9LU33"/>
<dbReference type="OMA" id="HYLEDMI"/>
<dbReference type="PhylomeDB" id="Q9LU33"/>
<dbReference type="PRO" id="PR:Q9LU33"/>
<dbReference type="Proteomes" id="UP000006548">
    <property type="component" value="Chromosome 3"/>
</dbReference>
<dbReference type="ExpressionAtlas" id="Q9LU33">
    <property type="expression patterns" value="baseline and differential"/>
</dbReference>
<dbReference type="GO" id="GO:0005737">
    <property type="term" value="C:cytoplasm"/>
    <property type="evidence" value="ECO:0007669"/>
    <property type="project" value="InterPro"/>
</dbReference>
<dbReference type="GO" id="GO:0120013">
    <property type="term" value="F:lipid transfer activity"/>
    <property type="evidence" value="ECO:0007669"/>
    <property type="project" value="InterPro"/>
</dbReference>
<dbReference type="FunFam" id="1.10.3520.10:FF:000008">
    <property type="entry name" value="Glycolipid transfer protein 2"/>
    <property type="match status" value="1"/>
</dbReference>
<dbReference type="Gene3D" id="1.10.3520.10">
    <property type="entry name" value="Glycolipid transfer protein"/>
    <property type="match status" value="1"/>
</dbReference>
<dbReference type="InterPro" id="IPR036497">
    <property type="entry name" value="GLTP_sf"/>
</dbReference>
<dbReference type="InterPro" id="IPR014830">
    <property type="entry name" value="Glycolipid_transfer_prot_dom"/>
</dbReference>
<dbReference type="PANTHER" id="PTHR10219:SF34">
    <property type="entry name" value="GLYCOLIPID TRANSFER PROTEIN 3"/>
    <property type="match status" value="1"/>
</dbReference>
<dbReference type="PANTHER" id="PTHR10219">
    <property type="entry name" value="GLYCOLIPID TRANSFER PROTEIN-RELATED"/>
    <property type="match status" value="1"/>
</dbReference>
<dbReference type="Pfam" id="PF08718">
    <property type="entry name" value="GLTP"/>
    <property type="match status" value="1"/>
</dbReference>
<dbReference type="SUPFAM" id="SSF110004">
    <property type="entry name" value="Glycolipid transfer protein, GLTP"/>
    <property type="match status" value="1"/>
</dbReference>
<evidence type="ECO:0000303" key="1">
    <source>
    </source>
</evidence>
<evidence type="ECO:0000305" key="2"/>
<evidence type="ECO:0000305" key="3">
    <source>
    </source>
</evidence>
<evidence type="ECO:0000312" key="4">
    <source>
        <dbReference type="Araport" id="AT3G21260"/>
    </source>
</evidence>
<evidence type="ECO:0000312" key="5">
    <source>
        <dbReference type="EMBL" id="BAB01718.1"/>
    </source>
</evidence>
<evidence type="ECO:0000312" key="6">
    <source>
        <dbReference type="Proteomes" id="UP000006548"/>
    </source>
</evidence>
<keyword id="KW-0025">Alternative splicing</keyword>
<keyword id="KW-0445">Lipid transport</keyword>
<keyword id="KW-1185">Reference proteome</keyword>
<keyword id="KW-0813">Transport</keyword>
<proteinExistence type="evidence at transcript level"/>
<organism evidence="6">
    <name type="scientific">Arabidopsis thaliana</name>
    <name type="common">Mouse-ear cress</name>
    <dbReference type="NCBI Taxonomy" id="3702"/>
    <lineage>
        <taxon>Eukaryota</taxon>
        <taxon>Viridiplantae</taxon>
        <taxon>Streptophyta</taxon>
        <taxon>Embryophyta</taxon>
        <taxon>Tracheophyta</taxon>
        <taxon>Spermatophyta</taxon>
        <taxon>Magnoliopsida</taxon>
        <taxon>eudicotyledons</taxon>
        <taxon>Gunneridae</taxon>
        <taxon>Pentapetalae</taxon>
        <taxon>rosids</taxon>
        <taxon>malvids</taxon>
        <taxon>Brassicales</taxon>
        <taxon>Brassicaceae</taxon>
        <taxon>Camelineae</taxon>
        <taxon>Arabidopsis</taxon>
    </lineage>
</organism>
<gene>
    <name evidence="1" type="primary">GLTP3</name>
    <name evidence="4" type="ordered locus">At3g21260</name>
    <name evidence="5" type="ORF">MXL8.12</name>
</gene>
<accession>Q9LU33</accession>
<accession>A0JPU4</accession>
<accession>Q0WRI8</accession>
<accession>Q8LCH8</accession>
<reference key="1">
    <citation type="journal article" date="2000" name="DNA Res.">
        <title>Structural analysis of Arabidopsis thaliana chromosome 3. I. Sequence features of the regions of 4,504,864 bp covered by sixty P1 and TAC clones.</title>
        <authorList>
            <person name="Sato S."/>
            <person name="Nakamura Y."/>
            <person name="Kaneko T."/>
            <person name="Katoh T."/>
            <person name="Asamizu E."/>
            <person name="Tabata S."/>
        </authorList>
    </citation>
    <scope>NUCLEOTIDE SEQUENCE [LARGE SCALE GENOMIC DNA]</scope>
    <source>
        <strain>cv. Columbia</strain>
    </source>
</reference>
<reference key="2">
    <citation type="journal article" date="2017" name="Plant J.">
        <title>Araport11: a complete reannotation of the Arabidopsis thaliana reference genome.</title>
        <authorList>
            <person name="Cheng C.Y."/>
            <person name="Krishnakumar V."/>
            <person name="Chan A.P."/>
            <person name="Thibaud-Nissen F."/>
            <person name="Schobel S."/>
            <person name="Town C.D."/>
        </authorList>
    </citation>
    <scope>GENOME REANNOTATION</scope>
    <source>
        <strain>cv. Columbia</strain>
    </source>
</reference>
<reference key="3">
    <citation type="submission" date="2006-07" db="EMBL/GenBank/DDBJ databases">
        <title>Large-scale analysis of RIKEN Arabidopsis full-length (RAFL) cDNAs.</title>
        <authorList>
            <person name="Totoki Y."/>
            <person name="Seki M."/>
            <person name="Ishida J."/>
            <person name="Nakajima M."/>
            <person name="Enju A."/>
            <person name="Kamiya A."/>
            <person name="Narusaka M."/>
            <person name="Shin-i T."/>
            <person name="Nakagawa M."/>
            <person name="Sakamoto N."/>
            <person name="Oishi K."/>
            <person name="Kohara Y."/>
            <person name="Kobayashi M."/>
            <person name="Toyoda A."/>
            <person name="Sakaki Y."/>
            <person name="Sakurai T."/>
            <person name="Iida K."/>
            <person name="Akiyama K."/>
            <person name="Satou M."/>
            <person name="Toyoda T."/>
            <person name="Konagaya A."/>
            <person name="Carninci P."/>
            <person name="Kawai J."/>
            <person name="Hayashizaki Y."/>
            <person name="Shinozaki K."/>
        </authorList>
    </citation>
    <scope>NUCLEOTIDE SEQUENCE [LARGE SCALE MRNA] (ISOFORM 2)</scope>
    <source>
        <strain>cv. Columbia</strain>
    </source>
</reference>
<reference key="4">
    <citation type="submission" date="2006-11" db="EMBL/GenBank/DDBJ databases">
        <title>Arabidopsis ORF Clones.</title>
        <authorList>
            <person name="Bautista V.R."/>
            <person name="Kim C.J."/>
            <person name="Chen H."/>
            <person name="Quinitio C."/>
            <person name="Ecker J.R."/>
        </authorList>
    </citation>
    <scope>NUCLEOTIDE SEQUENCE [LARGE SCALE MRNA] (ISOFORM 3)</scope>
    <source>
        <strain>cv. Columbia</strain>
    </source>
</reference>
<reference key="5">
    <citation type="submission" date="2002-03" db="EMBL/GenBank/DDBJ databases">
        <title>Full-length cDNA from Arabidopsis thaliana.</title>
        <authorList>
            <person name="Brover V.V."/>
            <person name="Troukhan M.E."/>
            <person name="Alexandrov N.A."/>
            <person name="Lu Y.-P."/>
            <person name="Flavell R.B."/>
            <person name="Feldmann K.A."/>
        </authorList>
    </citation>
    <scope>NUCLEOTIDE SEQUENCE [LARGE SCALE MRNA] (ISOFORM 3)</scope>
</reference>
<reference key="6">
    <citation type="journal article" date="2006" name="J. Mol. Biol.">
        <title>Structural evidence for adaptive ligand binding of glycolipid transfer protein.</title>
        <authorList>
            <person name="Airenne T.T."/>
            <person name="Kidron H."/>
            <person name="Nymalm Y."/>
            <person name="Nylund M."/>
            <person name="West G."/>
            <person name="Mattjus P."/>
            <person name="Salminen T.A."/>
        </authorList>
    </citation>
    <scope>FUNCTION</scope>
</reference>
<name>GLTP3_ARATH</name>